<gene>
    <name evidence="1" type="primary">rimM</name>
    <name type="ordered locus">Rsph17029_2708</name>
</gene>
<reference key="1">
    <citation type="submission" date="2007-02" db="EMBL/GenBank/DDBJ databases">
        <title>Complete sequence of chromosome 1 of Rhodobacter sphaeroides ATCC 17029.</title>
        <authorList>
            <person name="Copeland A."/>
            <person name="Lucas S."/>
            <person name="Lapidus A."/>
            <person name="Barry K."/>
            <person name="Detter J.C."/>
            <person name="Glavina del Rio T."/>
            <person name="Hammon N."/>
            <person name="Israni S."/>
            <person name="Dalin E."/>
            <person name="Tice H."/>
            <person name="Pitluck S."/>
            <person name="Kiss H."/>
            <person name="Brettin T."/>
            <person name="Bruce D."/>
            <person name="Han C."/>
            <person name="Tapia R."/>
            <person name="Gilna P."/>
            <person name="Schmutz J."/>
            <person name="Larimer F."/>
            <person name="Land M."/>
            <person name="Hauser L."/>
            <person name="Kyrpides N."/>
            <person name="Mikhailova N."/>
            <person name="Richardson P."/>
            <person name="Mackenzie C."/>
            <person name="Choudhary M."/>
            <person name="Donohue T.J."/>
            <person name="Kaplan S."/>
        </authorList>
    </citation>
    <scope>NUCLEOTIDE SEQUENCE [LARGE SCALE GENOMIC DNA]</scope>
    <source>
        <strain>ATCC 17029 / ATH 2.4.9</strain>
    </source>
</reference>
<organism>
    <name type="scientific">Cereibacter sphaeroides (strain ATCC 17029 / ATH 2.4.9)</name>
    <name type="common">Rhodobacter sphaeroides</name>
    <dbReference type="NCBI Taxonomy" id="349101"/>
    <lineage>
        <taxon>Bacteria</taxon>
        <taxon>Pseudomonadati</taxon>
        <taxon>Pseudomonadota</taxon>
        <taxon>Alphaproteobacteria</taxon>
        <taxon>Rhodobacterales</taxon>
        <taxon>Paracoccaceae</taxon>
        <taxon>Cereibacter</taxon>
    </lineage>
</organism>
<proteinExistence type="inferred from homology"/>
<sequence length="169" mass="17663">MTKTDRVCVGAIAGAFGVKGEVRLKSFCTEPTDIASYGPLSTEKGDRSFRVTLTRPVAGGLGARLSDVTTKEEADALRGVGLYVDRARLPSLGDDEFYHADLIGLEVRDTGGALLGRVHAVHNHGAGDILEIAGAVGREGLLLPFTRAVVPTVDLAAGRIVADPPEGLD</sequence>
<keyword id="KW-0143">Chaperone</keyword>
<keyword id="KW-0963">Cytoplasm</keyword>
<keyword id="KW-0690">Ribosome biogenesis</keyword>
<keyword id="KW-0698">rRNA processing</keyword>
<protein>
    <recommendedName>
        <fullName evidence="1">Ribosome maturation factor RimM</fullName>
    </recommendedName>
</protein>
<feature type="chain" id="PRO_1000001224" description="Ribosome maturation factor RimM">
    <location>
        <begin position="1"/>
        <end position="169"/>
    </location>
</feature>
<feature type="domain" description="PRC barrel" evidence="1">
    <location>
        <begin position="94"/>
        <end position="168"/>
    </location>
</feature>
<name>RIMM_CERS1</name>
<evidence type="ECO:0000255" key="1">
    <source>
        <dbReference type="HAMAP-Rule" id="MF_00014"/>
    </source>
</evidence>
<accession>A3PN94</accession>
<dbReference type="EMBL" id="CP000577">
    <property type="protein sequence ID" value="ABN77810.1"/>
    <property type="molecule type" value="Genomic_DNA"/>
</dbReference>
<dbReference type="RefSeq" id="WP_011841837.1">
    <property type="nucleotide sequence ID" value="NC_009049.1"/>
</dbReference>
<dbReference type="SMR" id="A3PN94"/>
<dbReference type="KEGG" id="rsh:Rsph17029_2708"/>
<dbReference type="HOGENOM" id="CLU_077636_0_1_5"/>
<dbReference type="GO" id="GO:0005737">
    <property type="term" value="C:cytoplasm"/>
    <property type="evidence" value="ECO:0007669"/>
    <property type="project" value="UniProtKB-SubCell"/>
</dbReference>
<dbReference type="GO" id="GO:0005840">
    <property type="term" value="C:ribosome"/>
    <property type="evidence" value="ECO:0007669"/>
    <property type="project" value="InterPro"/>
</dbReference>
<dbReference type="GO" id="GO:0043022">
    <property type="term" value="F:ribosome binding"/>
    <property type="evidence" value="ECO:0007669"/>
    <property type="project" value="InterPro"/>
</dbReference>
<dbReference type="GO" id="GO:0042274">
    <property type="term" value="P:ribosomal small subunit biogenesis"/>
    <property type="evidence" value="ECO:0007669"/>
    <property type="project" value="UniProtKB-UniRule"/>
</dbReference>
<dbReference type="GO" id="GO:0006364">
    <property type="term" value="P:rRNA processing"/>
    <property type="evidence" value="ECO:0007669"/>
    <property type="project" value="UniProtKB-UniRule"/>
</dbReference>
<dbReference type="Gene3D" id="2.30.30.240">
    <property type="entry name" value="PRC-barrel domain"/>
    <property type="match status" value="1"/>
</dbReference>
<dbReference type="Gene3D" id="2.40.30.60">
    <property type="entry name" value="RimM"/>
    <property type="match status" value="1"/>
</dbReference>
<dbReference type="HAMAP" id="MF_00014">
    <property type="entry name" value="Ribosome_mat_RimM"/>
    <property type="match status" value="1"/>
</dbReference>
<dbReference type="InterPro" id="IPR011033">
    <property type="entry name" value="PRC_barrel-like_sf"/>
</dbReference>
<dbReference type="InterPro" id="IPR056792">
    <property type="entry name" value="PRC_RimM"/>
</dbReference>
<dbReference type="InterPro" id="IPR011961">
    <property type="entry name" value="RimM"/>
</dbReference>
<dbReference type="InterPro" id="IPR002676">
    <property type="entry name" value="RimM_N"/>
</dbReference>
<dbReference type="InterPro" id="IPR036976">
    <property type="entry name" value="RimM_N_sf"/>
</dbReference>
<dbReference type="InterPro" id="IPR009000">
    <property type="entry name" value="Transl_B-barrel_sf"/>
</dbReference>
<dbReference type="NCBIfam" id="TIGR02273">
    <property type="entry name" value="16S_RimM"/>
    <property type="match status" value="1"/>
</dbReference>
<dbReference type="PANTHER" id="PTHR33692">
    <property type="entry name" value="RIBOSOME MATURATION FACTOR RIMM"/>
    <property type="match status" value="1"/>
</dbReference>
<dbReference type="PANTHER" id="PTHR33692:SF1">
    <property type="entry name" value="RIBOSOME MATURATION FACTOR RIMM"/>
    <property type="match status" value="1"/>
</dbReference>
<dbReference type="Pfam" id="PF24986">
    <property type="entry name" value="PRC_RimM"/>
    <property type="match status" value="1"/>
</dbReference>
<dbReference type="Pfam" id="PF01782">
    <property type="entry name" value="RimM"/>
    <property type="match status" value="1"/>
</dbReference>
<dbReference type="SUPFAM" id="SSF50346">
    <property type="entry name" value="PRC-barrel domain"/>
    <property type="match status" value="1"/>
</dbReference>
<dbReference type="SUPFAM" id="SSF50447">
    <property type="entry name" value="Translation proteins"/>
    <property type="match status" value="1"/>
</dbReference>
<comment type="function">
    <text evidence="1">An accessory protein needed during the final step in the assembly of 30S ribosomal subunit, possibly for assembly of the head region. Essential for efficient processing of 16S rRNA. May be needed both before and after RbfA during the maturation of 16S rRNA. It has affinity for free ribosomal 30S subunits but not for 70S ribosomes.</text>
</comment>
<comment type="subunit">
    <text evidence="1">Binds ribosomal protein uS19.</text>
</comment>
<comment type="subcellular location">
    <subcellularLocation>
        <location evidence="1">Cytoplasm</location>
    </subcellularLocation>
</comment>
<comment type="domain">
    <text evidence="1">The PRC barrel domain binds ribosomal protein uS19.</text>
</comment>
<comment type="similarity">
    <text evidence="1">Belongs to the RimM family.</text>
</comment>